<dbReference type="EC" id="3.6.1.66" evidence="1"/>
<dbReference type="RefSeq" id="XP_002131447.1">
    <property type="nucleotide sequence ID" value="XM_002131411.5"/>
</dbReference>
<dbReference type="RefSeq" id="XP_018668785.1">
    <property type="nucleotide sequence ID" value="XM_018813240.1"/>
</dbReference>
<dbReference type="SMR" id="F6Y089"/>
<dbReference type="FunCoup" id="F6Y089">
    <property type="interactions" value="625"/>
</dbReference>
<dbReference type="STRING" id="7719.ENSCINP00000025829"/>
<dbReference type="Ensembl" id="ENSCINT00000026075.2">
    <property type="protein sequence ID" value="ENSCINP00000025829.2"/>
    <property type="gene ID" value="ENSCING00000014230.2"/>
</dbReference>
<dbReference type="GeneID" id="100180887"/>
<dbReference type="KEGG" id="cin:100180887"/>
<dbReference type="eggNOG" id="KOG3222">
    <property type="taxonomic scope" value="Eukaryota"/>
</dbReference>
<dbReference type="GeneTree" id="ENSGT00390000015399"/>
<dbReference type="HOGENOM" id="CLU_082080_1_1_1"/>
<dbReference type="InParanoid" id="F6Y089"/>
<dbReference type="OMA" id="YDPIFQP"/>
<dbReference type="OrthoDB" id="6288734at2759"/>
<dbReference type="TreeFam" id="TF105614"/>
<dbReference type="Proteomes" id="UP000008144">
    <property type="component" value="Chromosome 9"/>
</dbReference>
<dbReference type="GO" id="GO:0005737">
    <property type="term" value="C:cytoplasm"/>
    <property type="evidence" value="ECO:0000318"/>
    <property type="project" value="GO_Central"/>
</dbReference>
<dbReference type="GO" id="GO:0035870">
    <property type="term" value="F:dITP diphosphatase activity"/>
    <property type="evidence" value="ECO:0007669"/>
    <property type="project" value="RHEA"/>
</dbReference>
<dbReference type="GO" id="GO:0036220">
    <property type="term" value="F:ITP diphosphatase activity"/>
    <property type="evidence" value="ECO:0007669"/>
    <property type="project" value="RHEA"/>
</dbReference>
<dbReference type="GO" id="GO:0046872">
    <property type="term" value="F:metal ion binding"/>
    <property type="evidence" value="ECO:0007669"/>
    <property type="project" value="UniProtKB-KW"/>
</dbReference>
<dbReference type="GO" id="GO:0047429">
    <property type="term" value="F:nucleoside triphosphate diphosphatase activity"/>
    <property type="evidence" value="ECO:0000318"/>
    <property type="project" value="GO_Central"/>
</dbReference>
<dbReference type="GO" id="GO:0000166">
    <property type="term" value="F:nucleotide binding"/>
    <property type="evidence" value="ECO:0007669"/>
    <property type="project" value="UniProtKB-KW"/>
</dbReference>
<dbReference type="GO" id="GO:0036222">
    <property type="term" value="F:XTP diphosphatase activity"/>
    <property type="evidence" value="ECO:0007669"/>
    <property type="project" value="RHEA"/>
</dbReference>
<dbReference type="GO" id="GO:0009204">
    <property type="term" value="P:deoxyribonucleoside triphosphate catabolic process"/>
    <property type="evidence" value="ECO:0007669"/>
    <property type="project" value="UniProtKB-UniRule"/>
</dbReference>
<dbReference type="GO" id="GO:0009143">
    <property type="term" value="P:nucleoside triphosphate catabolic process"/>
    <property type="evidence" value="ECO:0000318"/>
    <property type="project" value="GO_Central"/>
</dbReference>
<dbReference type="GO" id="GO:0009117">
    <property type="term" value="P:nucleotide metabolic process"/>
    <property type="evidence" value="ECO:0007669"/>
    <property type="project" value="UniProtKB-KW"/>
</dbReference>
<dbReference type="CDD" id="cd00515">
    <property type="entry name" value="HAM1"/>
    <property type="match status" value="1"/>
</dbReference>
<dbReference type="FunFam" id="3.90.950.10:FF:000003">
    <property type="entry name" value="Inosine triphosphate pyrophosphatase"/>
    <property type="match status" value="1"/>
</dbReference>
<dbReference type="Gene3D" id="3.90.950.10">
    <property type="match status" value="1"/>
</dbReference>
<dbReference type="HAMAP" id="MF_03148">
    <property type="entry name" value="HAM1_NTPase"/>
    <property type="match status" value="1"/>
</dbReference>
<dbReference type="InterPro" id="IPR027502">
    <property type="entry name" value="ITPase"/>
</dbReference>
<dbReference type="InterPro" id="IPR029001">
    <property type="entry name" value="ITPase-like_fam"/>
</dbReference>
<dbReference type="InterPro" id="IPR002637">
    <property type="entry name" value="RdgB/HAM1"/>
</dbReference>
<dbReference type="NCBIfam" id="TIGR00042">
    <property type="entry name" value="RdgB/HAM1 family non-canonical purine NTP pyrophosphatase"/>
    <property type="match status" value="1"/>
</dbReference>
<dbReference type="PANTHER" id="PTHR11067:SF9">
    <property type="entry name" value="INOSINE TRIPHOSPHATE PYROPHOSPHATASE"/>
    <property type="match status" value="1"/>
</dbReference>
<dbReference type="PANTHER" id="PTHR11067">
    <property type="entry name" value="INOSINE TRIPHOSPHATE PYROPHOSPHATASE/HAM1 PROTEIN"/>
    <property type="match status" value="1"/>
</dbReference>
<dbReference type="Pfam" id="PF01725">
    <property type="entry name" value="Ham1p_like"/>
    <property type="match status" value="1"/>
</dbReference>
<dbReference type="SUPFAM" id="SSF52972">
    <property type="entry name" value="ITPase-like"/>
    <property type="match status" value="1"/>
</dbReference>
<feature type="chain" id="PRO_0000413105" description="Inosine triphosphate pyrophosphatase">
    <location>
        <begin position="1"/>
        <end position="192"/>
    </location>
</feature>
<feature type="binding site" evidence="1">
    <location>
        <begin position="11"/>
        <end position="16"/>
    </location>
    <ligand>
        <name>ITP</name>
        <dbReference type="ChEBI" id="CHEBI:61402"/>
    </ligand>
</feature>
<feature type="binding site" evidence="1">
    <location>
        <position position="41"/>
    </location>
    <ligand>
        <name>Mg(2+)</name>
        <dbReference type="ChEBI" id="CHEBI:18420"/>
    </ligand>
</feature>
<feature type="binding site" evidence="1">
    <location>
        <position position="53"/>
    </location>
    <ligand>
        <name>ITP</name>
        <dbReference type="ChEBI" id="CHEBI:61402"/>
    </ligand>
</feature>
<feature type="binding site" evidence="1">
    <location>
        <begin position="69"/>
        <end position="70"/>
    </location>
    <ligand>
        <name>ITP</name>
        <dbReference type="ChEBI" id="CHEBI:61402"/>
    </ligand>
</feature>
<feature type="binding site" evidence="1">
    <location>
        <position position="86"/>
    </location>
    <ligand>
        <name>ITP</name>
        <dbReference type="ChEBI" id="CHEBI:61402"/>
    </ligand>
</feature>
<feature type="binding site" evidence="1">
    <location>
        <begin position="146"/>
        <end position="149"/>
    </location>
    <ligand>
        <name>ITP</name>
        <dbReference type="ChEBI" id="CHEBI:61402"/>
    </ligand>
</feature>
<feature type="binding site" evidence="1">
    <location>
        <position position="169"/>
    </location>
    <ligand>
        <name>ITP</name>
        <dbReference type="ChEBI" id="CHEBI:61402"/>
    </ligand>
</feature>
<feature type="binding site" evidence="1">
    <location>
        <begin position="174"/>
        <end position="175"/>
    </location>
    <ligand>
        <name>ITP</name>
        <dbReference type="ChEBI" id="CHEBI:61402"/>
    </ligand>
</feature>
<accession>F6Y089</accession>
<protein>
    <recommendedName>
        <fullName evidence="1">Inosine triphosphate pyrophosphatase</fullName>
        <shortName evidence="1">ITPase</shortName>
        <shortName evidence="1">Inosine triphosphatase</shortName>
        <ecNumber evidence="1">3.6.1.66</ecNumber>
    </recommendedName>
    <alternativeName>
        <fullName evidence="1">Non-canonical purine NTP pyrophosphatase</fullName>
    </alternativeName>
    <alternativeName>
        <fullName evidence="1">Non-standard purine NTP pyrophosphatase</fullName>
    </alternativeName>
    <alternativeName>
        <fullName evidence="1">Nucleoside-triphosphate diphosphatase</fullName>
    </alternativeName>
    <alternativeName>
        <fullName evidence="1">Nucleoside-triphosphate pyrophosphatase</fullName>
        <shortName evidence="1">NTPase</shortName>
    </alternativeName>
    <alternativeName>
        <fullName evidence="1">XTP/dITP diphosphatase</fullName>
    </alternativeName>
</protein>
<organism>
    <name type="scientific">Ciona intestinalis</name>
    <name type="common">Transparent sea squirt</name>
    <name type="synonym">Ascidia intestinalis</name>
    <dbReference type="NCBI Taxonomy" id="7719"/>
    <lineage>
        <taxon>Eukaryota</taxon>
        <taxon>Metazoa</taxon>
        <taxon>Chordata</taxon>
        <taxon>Tunicata</taxon>
        <taxon>Ascidiacea</taxon>
        <taxon>Phlebobranchia</taxon>
        <taxon>Cionidae</taxon>
        <taxon>Ciona</taxon>
    </lineage>
</organism>
<sequence length="192" mass="21268">MASRKTISFVTGNKNKLKEVQQFLHGSSSINITSVPLDLPEYQGEPDDVSKQKCAEASKQLSGPVLIEDTCLCFNAMGGLPGPYVKWFLEKLGPEGIYKMLDGWEDKSGYALCTFAYSNGLQGDDVLLFRGKCEGTIVPPRGPRTFGWDPCFQPNGFNETYAEMSSELKNSISHRGKALEALSEYFKEKNCD</sequence>
<reference key="1">
    <citation type="journal article" date="2002" name="Science">
        <title>The draft genome of Ciona intestinalis: insights into chordate and vertebrate origins.</title>
        <authorList>
            <person name="Dehal P."/>
            <person name="Satou Y."/>
            <person name="Campbell R.K."/>
            <person name="Chapman J."/>
            <person name="Degnan B."/>
            <person name="De Tomaso A."/>
            <person name="Davidson B."/>
            <person name="Di Gregorio A."/>
            <person name="Gelpke M."/>
            <person name="Goodstein D.M."/>
            <person name="Harafuji N."/>
            <person name="Hastings K.E."/>
            <person name="Ho I."/>
            <person name="Hotta K."/>
            <person name="Huang W."/>
            <person name="Kawashima T."/>
            <person name="Lemaire P."/>
            <person name="Martinez D."/>
            <person name="Meinertzhagen I.A."/>
            <person name="Necula S."/>
            <person name="Nonaka M."/>
            <person name="Putnam N."/>
            <person name="Rash S."/>
            <person name="Saiga H."/>
            <person name="Satake M."/>
            <person name="Terry A."/>
            <person name="Yamada L."/>
            <person name="Wang H.G."/>
            <person name="Awazu S."/>
            <person name="Azumi K."/>
            <person name="Boore J."/>
            <person name="Branno M."/>
            <person name="Chin-Bow S."/>
            <person name="DeSantis R."/>
            <person name="Doyle S."/>
            <person name="Francino P."/>
            <person name="Keys D.N."/>
            <person name="Haga S."/>
            <person name="Hayashi H."/>
            <person name="Hino K."/>
            <person name="Imai K.S."/>
            <person name="Inaba K."/>
            <person name="Kano S."/>
            <person name="Kobayashi K."/>
            <person name="Kobayashi M."/>
            <person name="Lee B.I."/>
            <person name="Makabe K.W."/>
            <person name="Manohar C."/>
            <person name="Matassi G."/>
            <person name="Medina M."/>
            <person name="Mochizuki Y."/>
            <person name="Mount S."/>
            <person name="Morishita T."/>
            <person name="Miura S."/>
            <person name="Nakayama A."/>
            <person name="Nishizaka S."/>
            <person name="Nomoto H."/>
            <person name="Ohta F."/>
            <person name="Oishi K."/>
            <person name="Rigoutsos I."/>
            <person name="Sano M."/>
            <person name="Sasaki A."/>
            <person name="Sasakura Y."/>
            <person name="Shoguchi E."/>
            <person name="Shin-i T."/>
            <person name="Spagnuolo A."/>
            <person name="Stainier D."/>
            <person name="Suzuki M.M."/>
            <person name="Tassy O."/>
            <person name="Takatori N."/>
            <person name="Tokuoka M."/>
            <person name="Yagi K."/>
            <person name="Yoshizaki F."/>
            <person name="Wada S."/>
            <person name="Zhang C."/>
            <person name="Hyatt P.D."/>
            <person name="Larimer F."/>
            <person name="Detter C."/>
            <person name="Doggett N."/>
            <person name="Glavina T."/>
            <person name="Hawkins T."/>
            <person name="Richardson P."/>
            <person name="Lucas S."/>
            <person name="Kohara Y."/>
            <person name="Levine M."/>
            <person name="Satoh N."/>
            <person name="Rokhsar D.S."/>
        </authorList>
    </citation>
    <scope>NUCLEOTIDE SEQUENCE [LARGE SCALE GENOMIC DNA]</scope>
</reference>
<keyword id="KW-0963">Cytoplasm</keyword>
<keyword id="KW-0378">Hydrolase</keyword>
<keyword id="KW-0460">Magnesium</keyword>
<keyword id="KW-0464">Manganese</keyword>
<keyword id="KW-0479">Metal-binding</keyword>
<keyword id="KW-0546">Nucleotide metabolism</keyword>
<keyword id="KW-0547">Nucleotide-binding</keyword>
<keyword id="KW-1185">Reference proteome</keyword>
<evidence type="ECO:0000255" key="1">
    <source>
        <dbReference type="HAMAP-Rule" id="MF_03148"/>
    </source>
</evidence>
<comment type="function">
    <text evidence="1">Pyrophosphatase that hydrolyzes non-canonical purine nucleotides such as inosine triphosphate (ITP), deoxyinosine triphosphate (dITP) or xanthosine 5'-triphosphate (XTP) to their respective monophosphate derivatives. The enzyme does not distinguish between the deoxy- and ribose forms. Probably excludes non-canonical purines from RNA and DNA precursor pools, thus preventing their incorporation into RNA and DNA and avoiding chromosomal lesions.</text>
</comment>
<comment type="catalytic activity">
    <reaction evidence="1">
        <text>ITP + H2O = IMP + diphosphate + H(+)</text>
        <dbReference type="Rhea" id="RHEA:29399"/>
        <dbReference type="ChEBI" id="CHEBI:15377"/>
        <dbReference type="ChEBI" id="CHEBI:15378"/>
        <dbReference type="ChEBI" id="CHEBI:33019"/>
        <dbReference type="ChEBI" id="CHEBI:58053"/>
        <dbReference type="ChEBI" id="CHEBI:61402"/>
        <dbReference type="EC" id="3.6.1.66"/>
    </reaction>
    <physiologicalReaction direction="left-to-right" evidence="1">
        <dbReference type="Rhea" id="RHEA:29400"/>
    </physiologicalReaction>
</comment>
<comment type="catalytic activity">
    <reaction evidence="1">
        <text>dITP + H2O = dIMP + diphosphate + H(+)</text>
        <dbReference type="Rhea" id="RHEA:28342"/>
        <dbReference type="ChEBI" id="CHEBI:15377"/>
        <dbReference type="ChEBI" id="CHEBI:15378"/>
        <dbReference type="ChEBI" id="CHEBI:33019"/>
        <dbReference type="ChEBI" id="CHEBI:61194"/>
        <dbReference type="ChEBI" id="CHEBI:61382"/>
        <dbReference type="EC" id="3.6.1.66"/>
    </reaction>
    <physiologicalReaction direction="left-to-right" evidence="1">
        <dbReference type="Rhea" id="RHEA:28343"/>
    </physiologicalReaction>
</comment>
<comment type="catalytic activity">
    <reaction evidence="1">
        <text>XTP + H2O = XMP + diphosphate + H(+)</text>
        <dbReference type="Rhea" id="RHEA:28610"/>
        <dbReference type="ChEBI" id="CHEBI:15377"/>
        <dbReference type="ChEBI" id="CHEBI:15378"/>
        <dbReference type="ChEBI" id="CHEBI:33019"/>
        <dbReference type="ChEBI" id="CHEBI:57464"/>
        <dbReference type="ChEBI" id="CHEBI:61314"/>
        <dbReference type="EC" id="3.6.1.66"/>
    </reaction>
    <physiologicalReaction direction="left-to-right" evidence="1">
        <dbReference type="Rhea" id="RHEA:28611"/>
    </physiologicalReaction>
</comment>
<comment type="cofactor">
    <cofactor evidence="1">
        <name>Mg(2+)</name>
        <dbReference type="ChEBI" id="CHEBI:18420"/>
    </cofactor>
    <cofactor evidence="1">
        <name>Mn(2+)</name>
        <dbReference type="ChEBI" id="CHEBI:29035"/>
    </cofactor>
    <text evidence="1">Binds 1 divalent metal cation per subunit; can use either Mg(2+) or Mn(2+).</text>
</comment>
<comment type="subunit">
    <text evidence="1">Homodimer.</text>
</comment>
<comment type="subcellular location">
    <subcellularLocation>
        <location evidence="1">Cytoplasm</location>
    </subcellularLocation>
</comment>
<comment type="similarity">
    <text evidence="1">Belongs to the HAM1 NTPase family.</text>
</comment>
<proteinExistence type="inferred from homology"/>
<name>ITPA_CIOIN</name>